<protein>
    <recommendedName>
        <fullName evidence="1">ATP synthase subunit beta</fullName>
        <ecNumber evidence="1">7.1.2.2</ecNumber>
    </recommendedName>
    <alternativeName>
        <fullName evidence="1">ATP synthase F1 sector subunit beta</fullName>
    </alternativeName>
    <alternativeName>
        <fullName evidence="1">F-ATPase subunit beta</fullName>
    </alternativeName>
</protein>
<proteinExistence type="inferred from homology"/>
<reference key="1">
    <citation type="journal article" date="2004" name="Genome Res.">
        <title>The genome sequence of Mycoplasma mycoides subsp. mycoides SC type strain PG1T, the causative agent of contagious bovine pleuropneumonia (CBPP).</title>
        <authorList>
            <person name="Westberg J."/>
            <person name="Persson A."/>
            <person name="Holmberg A."/>
            <person name="Goesmann A."/>
            <person name="Lundeberg J."/>
            <person name="Johansson K.-E."/>
            <person name="Pettersson B."/>
            <person name="Uhlen M."/>
        </authorList>
    </citation>
    <scope>NUCLEOTIDE SEQUENCE [LARGE SCALE GENOMIC DNA]</scope>
    <source>
        <strain>CCUG 32753 / NCTC 10114 / PG1</strain>
    </source>
</reference>
<evidence type="ECO:0000255" key="1">
    <source>
        <dbReference type="HAMAP-Rule" id="MF_01347"/>
    </source>
</evidence>
<gene>
    <name evidence="1" type="primary">atpD</name>
    <name type="ordered locus">MSC_0885</name>
</gene>
<comment type="function">
    <text evidence="1">Produces ATP from ADP in the presence of a proton gradient across the membrane. The catalytic sites are hosted primarily by the beta subunits.</text>
</comment>
<comment type="catalytic activity">
    <reaction evidence="1">
        <text>ATP + H2O + 4 H(+)(in) = ADP + phosphate + 5 H(+)(out)</text>
        <dbReference type="Rhea" id="RHEA:57720"/>
        <dbReference type="ChEBI" id="CHEBI:15377"/>
        <dbReference type="ChEBI" id="CHEBI:15378"/>
        <dbReference type="ChEBI" id="CHEBI:30616"/>
        <dbReference type="ChEBI" id="CHEBI:43474"/>
        <dbReference type="ChEBI" id="CHEBI:456216"/>
        <dbReference type="EC" id="7.1.2.2"/>
    </reaction>
</comment>
<comment type="subunit">
    <text evidence="1">F-type ATPases have 2 components, CF(1) - the catalytic core - and CF(0) - the membrane proton channel. CF(1) has five subunits: alpha(3), beta(3), gamma(1), delta(1), epsilon(1). CF(0) has three main subunits: a(1), b(2) and c(9-12). The alpha and beta chains form an alternating ring which encloses part of the gamma chain. CF(1) is attached to CF(0) by a central stalk formed by the gamma and epsilon chains, while a peripheral stalk is formed by the delta and b chains.</text>
</comment>
<comment type="subcellular location">
    <subcellularLocation>
        <location evidence="1">Cell membrane</location>
        <topology evidence="1">Peripheral membrane protein</topology>
    </subcellularLocation>
</comment>
<comment type="similarity">
    <text evidence="1">Belongs to the ATPase alpha/beta chains family.</text>
</comment>
<feature type="chain" id="PRO_0000254306" description="ATP synthase subunit beta">
    <location>
        <begin position="1"/>
        <end position="475"/>
    </location>
</feature>
<feature type="binding site" evidence="1">
    <location>
        <begin position="161"/>
        <end position="168"/>
    </location>
    <ligand>
        <name>ATP</name>
        <dbReference type="ChEBI" id="CHEBI:30616"/>
    </ligand>
</feature>
<name>ATPB_MYCMS</name>
<sequence>MVSKNTTDKKKNQSIGKVIQVLGSVVDVKFSENSIPKIYDALIVDNNGKKLVLEVEQNIGDEIVRTIAMGPTEGLKRGLDVINTNSPITAPTGMEVLGRMFNVLGDPIDEKPDLDVKREPIHKDAPKYEELVTTTEILETGIKVIDLMIPFTKGGKVGLFGGAGVGKTILIQELINNIAKAHNGVSVFAGVGERTREGNDLYHEFIEAGVLNKTCLVFGQMNEPPGARMRVALTGLTIAEYFRDQKNMDVLLFIDNIFRFTQAGSEVSALLGRMPSAVGYQPTLSTEMGSLQERITSTKNGSITSVQAVYVPADDLTDPAPATTFTHLDARIVLDRSIASLGIYPAVDPLASSSRVLDPEIVGQEHYDIALRVQIALQKYQDLQSIIAILGMDELSEEDKLIVQRARKIRNFLSQSFFVGEKFTGRPGVFVKVNDTVRSFKSILDGEVDYIPETYFLYSSIIDDVIEKYNKDKDK</sequence>
<dbReference type="EC" id="7.1.2.2" evidence="1"/>
<dbReference type="EMBL" id="BX293980">
    <property type="protein sequence ID" value="CAE77496.1"/>
    <property type="molecule type" value="Genomic_DNA"/>
</dbReference>
<dbReference type="RefSeq" id="NP_975854.1">
    <property type="nucleotide sequence ID" value="NC_005364.2"/>
</dbReference>
<dbReference type="RefSeq" id="WP_011167038.1">
    <property type="nucleotide sequence ID" value="NC_005364.2"/>
</dbReference>
<dbReference type="SMR" id="Q6MS94"/>
<dbReference type="STRING" id="272632.MSC_0885"/>
<dbReference type="KEGG" id="mmy:MSC_0885"/>
<dbReference type="PATRIC" id="fig|272632.4.peg.957"/>
<dbReference type="eggNOG" id="COG0055">
    <property type="taxonomic scope" value="Bacteria"/>
</dbReference>
<dbReference type="HOGENOM" id="CLU_022398_0_2_14"/>
<dbReference type="Proteomes" id="UP000001016">
    <property type="component" value="Chromosome"/>
</dbReference>
<dbReference type="GO" id="GO:0005886">
    <property type="term" value="C:plasma membrane"/>
    <property type="evidence" value="ECO:0007669"/>
    <property type="project" value="UniProtKB-SubCell"/>
</dbReference>
<dbReference type="GO" id="GO:0045259">
    <property type="term" value="C:proton-transporting ATP synthase complex"/>
    <property type="evidence" value="ECO:0007669"/>
    <property type="project" value="UniProtKB-KW"/>
</dbReference>
<dbReference type="GO" id="GO:0005524">
    <property type="term" value="F:ATP binding"/>
    <property type="evidence" value="ECO:0007669"/>
    <property type="project" value="UniProtKB-UniRule"/>
</dbReference>
<dbReference type="GO" id="GO:0016887">
    <property type="term" value="F:ATP hydrolysis activity"/>
    <property type="evidence" value="ECO:0007669"/>
    <property type="project" value="InterPro"/>
</dbReference>
<dbReference type="GO" id="GO:0046933">
    <property type="term" value="F:proton-transporting ATP synthase activity, rotational mechanism"/>
    <property type="evidence" value="ECO:0007669"/>
    <property type="project" value="UniProtKB-UniRule"/>
</dbReference>
<dbReference type="CDD" id="cd18110">
    <property type="entry name" value="ATP-synt_F1_beta_C"/>
    <property type="match status" value="1"/>
</dbReference>
<dbReference type="CDD" id="cd18115">
    <property type="entry name" value="ATP-synt_F1_beta_N"/>
    <property type="match status" value="1"/>
</dbReference>
<dbReference type="CDD" id="cd01133">
    <property type="entry name" value="F1-ATPase_beta_CD"/>
    <property type="match status" value="1"/>
</dbReference>
<dbReference type="FunFam" id="1.10.1140.10:FF:000005">
    <property type="entry name" value="ATP synthase subunit beta"/>
    <property type="match status" value="1"/>
</dbReference>
<dbReference type="FunFam" id="3.40.50.300:FF:000004">
    <property type="entry name" value="ATP synthase subunit beta"/>
    <property type="match status" value="1"/>
</dbReference>
<dbReference type="Gene3D" id="2.40.10.170">
    <property type="match status" value="1"/>
</dbReference>
<dbReference type="Gene3D" id="1.10.1140.10">
    <property type="entry name" value="Bovine Mitochondrial F1-atpase, Atp Synthase Beta Chain, Chain D, domain 3"/>
    <property type="match status" value="1"/>
</dbReference>
<dbReference type="Gene3D" id="3.40.50.300">
    <property type="entry name" value="P-loop containing nucleotide triphosphate hydrolases"/>
    <property type="match status" value="1"/>
</dbReference>
<dbReference type="HAMAP" id="MF_01347">
    <property type="entry name" value="ATP_synth_beta_bact"/>
    <property type="match status" value="1"/>
</dbReference>
<dbReference type="InterPro" id="IPR003593">
    <property type="entry name" value="AAA+_ATPase"/>
</dbReference>
<dbReference type="InterPro" id="IPR055190">
    <property type="entry name" value="ATP-synt_VA_C"/>
</dbReference>
<dbReference type="InterPro" id="IPR005722">
    <property type="entry name" value="ATP_synth_F1_bsu"/>
</dbReference>
<dbReference type="InterPro" id="IPR020003">
    <property type="entry name" value="ATPase_a/bsu_AS"/>
</dbReference>
<dbReference type="InterPro" id="IPR050053">
    <property type="entry name" value="ATPase_alpha/beta_chains"/>
</dbReference>
<dbReference type="InterPro" id="IPR004100">
    <property type="entry name" value="ATPase_F1/V1/A1_a/bsu_N"/>
</dbReference>
<dbReference type="InterPro" id="IPR036121">
    <property type="entry name" value="ATPase_F1/V1/A1_a/bsu_N_sf"/>
</dbReference>
<dbReference type="InterPro" id="IPR000194">
    <property type="entry name" value="ATPase_F1/V1/A1_a/bsu_nucl-bd"/>
</dbReference>
<dbReference type="InterPro" id="IPR024034">
    <property type="entry name" value="ATPase_F1/V1_b/a_C"/>
</dbReference>
<dbReference type="InterPro" id="IPR027417">
    <property type="entry name" value="P-loop_NTPase"/>
</dbReference>
<dbReference type="NCBIfam" id="TIGR01039">
    <property type="entry name" value="atpD"/>
    <property type="match status" value="1"/>
</dbReference>
<dbReference type="PANTHER" id="PTHR15184">
    <property type="entry name" value="ATP SYNTHASE"/>
    <property type="match status" value="1"/>
</dbReference>
<dbReference type="PANTHER" id="PTHR15184:SF71">
    <property type="entry name" value="ATP SYNTHASE SUBUNIT BETA, MITOCHONDRIAL"/>
    <property type="match status" value="1"/>
</dbReference>
<dbReference type="Pfam" id="PF00006">
    <property type="entry name" value="ATP-synt_ab"/>
    <property type="match status" value="1"/>
</dbReference>
<dbReference type="Pfam" id="PF02874">
    <property type="entry name" value="ATP-synt_ab_N"/>
    <property type="match status" value="1"/>
</dbReference>
<dbReference type="Pfam" id="PF22919">
    <property type="entry name" value="ATP-synt_VA_C"/>
    <property type="match status" value="1"/>
</dbReference>
<dbReference type="SMART" id="SM00382">
    <property type="entry name" value="AAA"/>
    <property type="match status" value="1"/>
</dbReference>
<dbReference type="SUPFAM" id="SSF47917">
    <property type="entry name" value="C-terminal domain of alpha and beta subunits of F1 ATP synthase"/>
    <property type="match status" value="1"/>
</dbReference>
<dbReference type="SUPFAM" id="SSF50615">
    <property type="entry name" value="N-terminal domain of alpha and beta subunits of F1 ATP synthase"/>
    <property type="match status" value="1"/>
</dbReference>
<dbReference type="SUPFAM" id="SSF52540">
    <property type="entry name" value="P-loop containing nucleoside triphosphate hydrolases"/>
    <property type="match status" value="1"/>
</dbReference>
<dbReference type="PROSITE" id="PS00152">
    <property type="entry name" value="ATPASE_ALPHA_BETA"/>
    <property type="match status" value="1"/>
</dbReference>
<accession>Q6MS94</accession>
<organism>
    <name type="scientific">Mycoplasma mycoides subsp. mycoides SC (strain CCUG 32753 / NCTC 10114 / PG1)</name>
    <dbReference type="NCBI Taxonomy" id="272632"/>
    <lineage>
        <taxon>Bacteria</taxon>
        <taxon>Bacillati</taxon>
        <taxon>Mycoplasmatota</taxon>
        <taxon>Mollicutes</taxon>
        <taxon>Mycoplasmataceae</taxon>
        <taxon>Mycoplasma</taxon>
    </lineage>
</organism>
<keyword id="KW-0066">ATP synthesis</keyword>
<keyword id="KW-0067">ATP-binding</keyword>
<keyword id="KW-1003">Cell membrane</keyword>
<keyword id="KW-0139">CF(1)</keyword>
<keyword id="KW-0375">Hydrogen ion transport</keyword>
<keyword id="KW-0406">Ion transport</keyword>
<keyword id="KW-0472">Membrane</keyword>
<keyword id="KW-0547">Nucleotide-binding</keyword>
<keyword id="KW-1185">Reference proteome</keyword>
<keyword id="KW-1278">Translocase</keyword>
<keyword id="KW-0813">Transport</keyword>